<accession>A0RC17</accession>
<proteinExistence type="inferred from homology"/>
<keyword id="KW-0963">Cytoplasm</keyword>
<keyword id="KW-0328">Glycosyltransferase</keyword>
<keyword id="KW-0660">Purine salvage</keyword>
<keyword id="KW-0808">Transferase</keyword>
<sequence>MKVLQEKILNEGKVLSGDVLKVDAFLNHQIDPVLMQEIGKEFAKRFKEENITKIVTIESSGIAPAVMAALELGVKVIFARKRKSLTLQDNMYVANVYSFTKQETNEISLSRNHIDESDRVLIIDDFLANGQAALGLMSLVEQAGASIAGIGIVIEKAFQDGGKKLREQGVRVESLAEIASLGNGTVTFVQHETAEVK</sequence>
<comment type="function">
    <text evidence="1">Converts the preformed base xanthine, a product of nucleic acid breakdown, to xanthosine 5'-monophosphate (XMP), so it can be reused for RNA or DNA synthesis.</text>
</comment>
<comment type="catalytic activity">
    <reaction evidence="1">
        <text>XMP + diphosphate = xanthine + 5-phospho-alpha-D-ribose 1-diphosphate</text>
        <dbReference type="Rhea" id="RHEA:10800"/>
        <dbReference type="ChEBI" id="CHEBI:17712"/>
        <dbReference type="ChEBI" id="CHEBI:33019"/>
        <dbReference type="ChEBI" id="CHEBI:57464"/>
        <dbReference type="ChEBI" id="CHEBI:58017"/>
        <dbReference type="EC" id="2.4.2.22"/>
    </reaction>
</comment>
<comment type="pathway">
    <text evidence="1">Purine metabolism; XMP biosynthesis via salvage pathway; XMP from xanthine: step 1/1.</text>
</comment>
<comment type="subunit">
    <text evidence="1">Homodimer.</text>
</comment>
<comment type="subcellular location">
    <subcellularLocation>
        <location evidence="1">Cytoplasm</location>
    </subcellularLocation>
</comment>
<comment type="similarity">
    <text evidence="1">Belongs to the purine/pyrimidine phosphoribosyltransferase family. Xpt subfamily.</text>
</comment>
<comment type="sequence caution" evidence="2">
    <conflict type="erroneous initiation">
        <sequence resource="EMBL-CDS" id="ABK84760"/>
    </conflict>
</comment>
<feature type="chain" id="PRO_0000339668" description="Xanthine phosphoribosyltransferase">
    <location>
        <begin position="1"/>
        <end position="197"/>
    </location>
</feature>
<feature type="binding site" evidence="1">
    <location>
        <position position="20"/>
    </location>
    <ligand>
        <name>xanthine</name>
        <dbReference type="ChEBI" id="CHEBI:17712"/>
    </ligand>
</feature>
<feature type="binding site" evidence="1">
    <location>
        <position position="27"/>
    </location>
    <ligand>
        <name>xanthine</name>
        <dbReference type="ChEBI" id="CHEBI:17712"/>
    </ligand>
</feature>
<feature type="binding site" evidence="1">
    <location>
        <begin position="128"/>
        <end position="132"/>
    </location>
    <ligand>
        <name>5-phospho-alpha-D-ribose 1-diphosphate</name>
        <dbReference type="ChEBI" id="CHEBI:58017"/>
    </ligand>
</feature>
<feature type="binding site" evidence="1">
    <location>
        <position position="156"/>
    </location>
    <ligand>
        <name>xanthine</name>
        <dbReference type="ChEBI" id="CHEBI:17712"/>
    </ligand>
</feature>
<name>XPT_BACAH</name>
<dbReference type="EC" id="2.4.2.22" evidence="1"/>
<dbReference type="EMBL" id="CP000485">
    <property type="protein sequence ID" value="ABK84760.1"/>
    <property type="status" value="ALT_INIT"/>
    <property type="molecule type" value="Genomic_DNA"/>
</dbReference>
<dbReference type="RefSeq" id="WP_000866488.1">
    <property type="nucleotide sequence ID" value="NC_008600.1"/>
</dbReference>
<dbReference type="SMR" id="A0RC17"/>
<dbReference type="KEGG" id="btl:BALH_1417"/>
<dbReference type="HOGENOM" id="CLU_099015_0_0_9"/>
<dbReference type="UniPathway" id="UPA00602">
    <property type="reaction ID" value="UER00658"/>
</dbReference>
<dbReference type="GO" id="GO:0005737">
    <property type="term" value="C:cytoplasm"/>
    <property type="evidence" value="ECO:0007669"/>
    <property type="project" value="UniProtKB-SubCell"/>
</dbReference>
<dbReference type="GO" id="GO:0000310">
    <property type="term" value="F:xanthine phosphoribosyltransferase activity"/>
    <property type="evidence" value="ECO:0007669"/>
    <property type="project" value="UniProtKB-UniRule"/>
</dbReference>
<dbReference type="GO" id="GO:0006166">
    <property type="term" value="P:purine ribonucleoside salvage"/>
    <property type="evidence" value="ECO:0007669"/>
    <property type="project" value="UniProtKB-KW"/>
</dbReference>
<dbReference type="GO" id="GO:0046110">
    <property type="term" value="P:xanthine metabolic process"/>
    <property type="evidence" value="ECO:0007669"/>
    <property type="project" value="InterPro"/>
</dbReference>
<dbReference type="GO" id="GO:0032265">
    <property type="term" value="P:XMP salvage"/>
    <property type="evidence" value="ECO:0007669"/>
    <property type="project" value="UniProtKB-UniRule"/>
</dbReference>
<dbReference type="CDD" id="cd06223">
    <property type="entry name" value="PRTases_typeI"/>
    <property type="match status" value="1"/>
</dbReference>
<dbReference type="Gene3D" id="3.40.50.2020">
    <property type="match status" value="1"/>
</dbReference>
<dbReference type="HAMAP" id="MF_01184">
    <property type="entry name" value="XPRTase"/>
    <property type="match status" value="1"/>
</dbReference>
<dbReference type="InterPro" id="IPR000836">
    <property type="entry name" value="PRibTrfase_dom"/>
</dbReference>
<dbReference type="InterPro" id="IPR029057">
    <property type="entry name" value="PRTase-like"/>
</dbReference>
<dbReference type="InterPro" id="IPR050118">
    <property type="entry name" value="Pur/Pyrimidine_PRTase"/>
</dbReference>
<dbReference type="InterPro" id="IPR010079">
    <property type="entry name" value="Xanthine_PRibTrfase"/>
</dbReference>
<dbReference type="NCBIfam" id="NF006671">
    <property type="entry name" value="PRK09219.1"/>
    <property type="match status" value="1"/>
</dbReference>
<dbReference type="NCBIfam" id="TIGR01744">
    <property type="entry name" value="XPRTase"/>
    <property type="match status" value="1"/>
</dbReference>
<dbReference type="PANTHER" id="PTHR43864">
    <property type="entry name" value="HYPOXANTHINE/GUANINE PHOSPHORIBOSYLTRANSFERASE"/>
    <property type="match status" value="1"/>
</dbReference>
<dbReference type="PANTHER" id="PTHR43864:SF1">
    <property type="entry name" value="XANTHINE PHOSPHORIBOSYLTRANSFERASE"/>
    <property type="match status" value="1"/>
</dbReference>
<dbReference type="Pfam" id="PF00156">
    <property type="entry name" value="Pribosyltran"/>
    <property type="match status" value="1"/>
</dbReference>
<dbReference type="SUPFAM" id="SSF53271">
    <property type="entry name" value="PRTase-like"/>
    <property type="match status" value="1"/>
</dbReference>
<evidence type="ECO:0000255" key="1">
    <source>
        <dbReference type="HAMAP-Rule" id="MF_01184"/>
    </source>
</evidence>
<evidence type="ECO:0000305" key="2"/>
<gene>
    <name evidence="1" type="primary">xpt</name>
    <name type="ordered locus">BALH_1417</name>
</gene>
<organism>
    <name type="scientific">Bacillus thuringiensis (strain Al Hakam)</name>
    <dbReference type="NCBI Taxonomy" id="412694"/>
    <lineage>
        <taxon>Bacteria</taxon>
        <taxon>Bacillati</taxon>
        <taxon>Bacillota</taxon>
        <taxon>Bacilli</taxon>
        <taxon>Bacillales</taxon>
        <taxon>Bacillaceae</taxon>
        <taxon>Bacillus</taxon>
        <taxon>Bacillus cereus group</taxon>
    </lineage>
</organism>
<reference key="1">
    <citation type="journal article" date="2007" name="J. Bacteriol.">
        <title>The complete genome sequence of Bacillus thuringiensis Al Hakam.</title>
        <authorList>
            <person name="Challacombe J.F."/>
            <person name="Altherr M.R."/>
            <person name="Xie G."/>
            <person name="Bhotika S.S."/>
            <person name="Brown N."/>
            <person name="Bruce D."/>
            <person name="Campbell C.S."/>
            <person name="Campbell M.L."/>
            <person name="Chen J."/>
            <person name="Chertkov O."/>
            <person name="Cleland C."/>
            <person name="Dimitrijevic M."/>
            <person name="Doggett N.A."/>
            <person name="Fawcett J.J."/>
            <person name="Glavina T."/>
            <person name="Goodwin L.A."/>
            <person name="Green L.D."/>
            <person name="Han C.S."/>
            <person name="Hill K.K."/>
            <person name="Hitchcock P."/>
            <person name="Jackson P.J."/>
            <person name="Keim P."/>
            <person name="Kewalramani A.R."/>
            <person name="Longmire J."/>
            <person name="Lucas S."/>
            <person name="Malfatti S."/>
            <person name="Martinez D."/>
            <person name="McMurry K."/>
            <person name="Meincke L.J."/>
            <person name="Misra M."/>
            <person name="Moseman B.L."/>
            <person name="Mundt M."/>
            <person name="Munk A.C."/>
            <person name="Okinaka R.T."/>
            <person name="Parson-Quintana B."/>
            <person name="Reilly L.P."/>
            <person name="Richardson P."/>
            <person name="Robinson D.L."/>
            <person name="Saunders E."/>
            <person name="Tapia R."/>
            <person name="Tesmer J.G."/>
            <person name="Thayer N."/>
            <person name="Thompson L.S."/>
            <person name="Tice H."/>
            <person name="Ticknor L.O."/>
            <person name="Wills P.L."/>
            <person name="Gilna P."/>
            <person name="Brettin T.S."/>
        </authorList>
    </citation>
    <scope>NUCLEOTIDE SEQUENCE [LARGE SCALE GENOMIC DNA]</scope>
    <source>
        <strain>Al Hakam</strain>
    </source>
</reference>
<protein>
    <recommendedName>
        <fullName evidence="1">Xanthine phosphoribosyltransferase</fullName>
        <shortName evidence="1">XPRTase</shortName>
        <ecNumber evidence="1">2.4.2.22</ecNumber>
    </recommendedName>
</protein>